<feature type="chain" id="PRO_0000379178" description="ATP-dependent helicase/deoxyribonuclease subunit B">
    <location>
        <begin position="1"/>
        <end position="1150"/>
    </location>
</feature>
<feature type="binding site" evidence="1">
    <location>
        <begin position="8"/>
        <end position="15"/>
    </location>
    <ligand>
        <name>ATP</name>
        <dbReference type="ChEBI" id="CHEBI:30616"/>
    </ligand>
</feature>
<feature type="binding site" evidence="1">
    <location>
        <position position="789"/>
    </location>
    <ligand>
        <name>[4Fe-4S] cluster</name>
        <dbReference type="ChEBI" id="CHEBI:49883"/>
    </ligand>
</feature>
<feature type="binding site" evidence="1">
    <location>
        <position position="1109"/>
    </location>
    <ligand>
        <name>[4Fe-4S] cluster</name>
        <dbReference type="ChEBI" id="CHEBI:49883"/>
    </ligand>
</feature>
<feature type="binding site" evidence="1">
    <location>
        <position position="1112"/>
    </location>
    <ligand>
        <name>[4Fe-4S] cluster</name>
        <dbReference type="ChEBI" id="CHEBI:49883"/>
    </ligand>
</feature>
<feature type="binding site" evidence="1">
    <location>
        <position position="1118"/>
    </location>
    <ligand>
        <name>[4Fe-4S] cluster</name>
        <dbReference type="ChEBI" id="CHEBI:49883"/>
    </ligand>
</feature>
<comment type="function">
    <text evidence="1">The heterodimer acts as both an ATP-dependent DNA helicase and an ATP-dependent, dual-direction single-stranded exonuclease. Recognizes the chi site generating a DNA molecule suitable for the initiation of homologous recombination. The AddB subunit has 5' -&gt; 3' nuclease activity but not helicase activity.</text>
</comment>
<comment type="cofactor">
    <cofactor evidence="1">
        <name>Mg(2+)</name>
        <dbReference type="ChEBI" id="CHEBI:18420"/>
    </cofactor>
</comment>
<comment type="cofactor">
    <cofactor evidence="1">
        <name>[4Fe-4S] cluster</name>
        <dbReference type="ChEBI" id="CHEBI:49883"/>
    </cofactor>
    <text evidence="1">Binds 1 [4Fe-4S] cluster.</text>
</comment>
<comment type="subunit">
    <text evidence="1">Heterodimer of AddA and AddB.</text>
</comment>
<comment type="miscellaneous">
    <text evidence="1">Despite having conserved helicase domains, this subunit does not have helicase activity.</text>
</comment>
<comment type="similarity">
    <text evidence="1">Belongs to the helicase family. AddB/RexB type 1 subfamily.</text>
</comment>
<reference key="1">
    <citation type="submission" date="2005-09" db="EMBL/GenBank/DDBJ databases">
        <title>Complete genome sequence of Clostridium kluyveri and comparative genomics of Clostridia species.</title>
        <authorList>
            <person name="Inui M."/>
            <person name="Nonaka H."/>
            <person name="Shinoda Y."/>
            <person name="Ikenaga Y."/>
            <person name="Abe M."/>
            <person name="Naito K."/>
            <person name="Vertes A.A."/>
            <person name="Yukawa H."/>
        </authorList>
    </citation>
    <scope>NUCLEOTIDE SEQUENCE [LARGE SCALE GENOMIC DNA]</scope>
    <source>
        <strain>NBRC 12016</strain>
    </source>
</reference>
<evidence type="ECO:0000255" key="1">
    <source>
        <dbReference type="HAMAP-Rule" id="MF_01452"/>
    </source>
</evidence>
<keyword id="KW-0004">4Fe-4S</keyword>
<keyword id="KW-0067">ATP-binding</keyword>
<keyword id="KW-0227">DNA damage</keyword>
<keyword id="KW-0234">DNA repair</keyword>
<keyword id="KW-0238">DNA-binding</keyword>
<keyword id="KW-0269">Exonuclease</keyword>
<keyword id="KW-0347">Helicase</keyword>
<keyword id="KW-0378">Hydrolase</keyword>
<keyword id="KW-0408">Iron</keyword>
<keyword id="KW-0411">Iron-sulfur</keyword>
<keyword id="KW-0479">Metal-binding</keyword>
<keyword id="KW-0540">Nuclease</keyword>
<keyword id="KW-0547">Nucleotide-binding</keyword>
<sequence length="1150" mass="133639">MSIRFIYGRAGSGKSHYCLEDIKRRIQEVNDRNLILLVPEQFSFQAEKNLIKSIGEKGTLKAQVLSFRRMAEKVFDEVGGGIKKYINDAGKNILLYKIIEENKNKLKVYKTSAKKQGFVNLVSDIIGEFKKYNISPEFLKENLDSIENKSLKNKLEDIGMLFLEFQNRLSKNYIDLEDTLHILCEKLDKSIIFKNSEVWIDEFSTFTPQEYSIIEKIMCSAYRVNITLCMDALGEYSERESIDLFLPIKITERNILQIAEKNNIIYQKPVNLRCSPCYRFKNSTALQHLQHSLFSYPYKNYEKSTEDINIFKALNKYTEIDYIARDIVKACRDKNLRFKDMAVVTGDLDEYENLIKAVFNQYDIPYFIDKKREIIHNQIVILIISAVEILAKNWSYESVFRYLKTGLLDLEFDDIDILENYVLANGIRGRQWLDTKPWSFKINYGNFKEDDSEEEQEYLNKINCIRDKVREPILKLSNDIKGKKKGRHICEELYNFLCELKIPEKVEELIIEFRNTDRLDKANEYSQIWDIVVDVLDQIVDVLGEQSFGMEIFNEALEIGFSQYEIGVIPPALDQVLVSNITRIKSYNISALYIAGVNDGIFPVTISPEGIFTDQDRDELKQNGLEIAPNTRSRAFEEQFLIYATLTIVDKYLTLTYSMSDEEGKAKRPSVVISMIKKIFPKLQEKSNLLDASGYEGGIEAVNSPKVTFNMLISNIRRNLGHRENINSLWIDVYRWYREHEIWNKRLDTVLGAFYYNNEIKISDLVKIRRLYGKHLNMSVSRLEKFAQCPFGYFVQYGLKVKDRKMYSLSAPDLGSFMHGILERFSIGLKQKSLTWENVDERCCEENINDLVDNVLYDNPNSILNSSKKYKHVTDKLKKTLTRSVWLIAQHMKKGRFIPRAYELVFGEIGDFPPISIELDSGEKVSLTGKVDRVDTAKEDIITYIRIVDYKSGTREFKLSDVYYGFQLQLLIYLDAILTEFDKMTKGKSIPAGLLYFKLEDPIVRTKENIPDHEIEDRITKSLKMNGLLLNDVNVIRQMDTSMEKSSDIISVSIKKDGNLSKSKSSLATRKQFEILRKYVRSTIADLCKKILTGNIEVTPYKNKTKNGCSYCEYSAICQFDTSIKGNKYRIIEDKSDEEIWKHIENKVQE</sequence>
<accession>B9E0C6</accession>
<dbReference type="EC" id="3.1.-.-" evidence="1"/>
<dbReference type="EMBL" id="AP009049">
    <property type="protein sequence ID" value="BAH05951.1"/>
    <property type="molecule type" value="Genomic_DNA"/>
</dbReference>
<dbReference type="RefSeq" id="WP_012101368.1">
    <property type="nucleotide sequence ID" value="NC_011837.1"/>
</dbReference>
<dbReference type="SMR" id="B9E0C6"/>
<dbReference type="KEGG" id="ckr:CKR_0900"/>
<dbReference type="HOGENOM" id="CLU_007838_0_0_9"/>
<dbReference type="Proteomes" id="UP000007969">
    <property type="component" value="Chromosome"/>
</dbReference>
<dbReference type="GO" id="GO:0051539">
    <property type="term" value="F:4 iron, 4 sulfur cluster binding"/>
    <property type="evidence" value="ECO:0007669"/>
    <property type="project" value="UniProtKB-KW"/>
</dbReference>
<dbReference type="GO" id="GO:0008409">
    <property type="term" value="F:5'-3' exonuclease activity"/>
    <property type="evidence" value="ECO:0007669"/>
    <property type="project" value="UniProtKB-UniRule"/>
</dbReference>
<dbReference type="GO" id="GO:0005524">
    <property type="term" value="F:ATP binding"/>
    <property type="evidence" value="ECO:0007669"/>
    <property type="project" value="UniProtKB-UniRule"/>
</dbReference>
<dbReference type="GO" id="GO:0003690">
    <property type="term" value="F:double-stranded DNA binding"/>
    <property type="evidence" value="ECO:0007669"/>
    <property type="project" value="UniProtKB-UniRule"/>
</dbReference>
<dbReference type="GO" id="GO:0004386">
    <property type="term" value="F:helicase activity"/>
    <property type="evidence" value="ECO:0007669"/>
    <property type="project" value="UniProtKB-KW"/>
</dbReference>
<dbReference type="GO" id="GO:0046872">
    <property type="term" value="F:metal ion binding"/>
    <property type="evidence" value="ECO:0007669"/>
    <property type="project" value="UniProtKB-KW"/>
</dbReference>
<dbReference type="GO" id="GO:0000724">
    <property type="term" value="P:double-strand break repair via homologous recombination"/>
    <property type="evidence" value="ECO:0007669"/>
    <property type="project" value="UniProtKB-UniRule"/>
</dbReference>
<dbReference type="Gene3D" id="3.90.320.10">
    <property type="match status" value="1"/>
</dbReference>
<dbReference type="Gene3D" id="6.10.140.1030">
    <property type="match status" value="1"/>
</dbReference>
<dbReference type="Gene3D" id="3.40.50.300">
    <property type="entry name" value="P-loop containing nucleotide triphosphate hydrolases"/>
    <property type="match status" value="4"/>
</dbReference>
<dbReference type="HAMAP" id="MF_01452">
    <property type="entry name" value="AddB_type1"/>
    <property type="match status" value="1"/>
</dbReference>
<dbReference type="InterPro" id="IPR049035">
    <property type="entry name" value="ADDB_N"/>
</dbReference>
<dbReference type="InterPro" id="IPR014140">
    <property type="entry name" value="DNA_helicase_suAddB"/>
</dbReference>
<dbReference type="InterPro" id="IPR027417">
    <property type="entry name" value="P-loop_NTPase"/>
</dbReference>
<dbReference type="InterPro" id="IPR011604">
    <property type="entry name" value="PDDEXK-like_dom_sf"/>
</dbReference>
<dbReference type="InterPro" id="IPR038726">
    <property type="entry name" value="PDDEXK_AddAB-type"/>
</dbReference>
<dbReference type="NCBIfam" id="TIGR02773">
    <property type="entry name" value="addB_Gpos"/>
    <property type="match status" value="1"/>
</dbReference>
<dbReference type="PANTHER" id="PTHR30591">
    <property type="entry name" value="RECBCD ENZYME SUBUNIT RECC"/>
    <property type="match status" value="1"/>
</dbReference>
<dbReference type="PANTHER" id="PTHR30591:SF1">
    <property type="entry name" value="RECBCD ENZYME SUBUNIT RECC"/>
    <property type="match status" value="1"/>
</dbReference>
<dbReference type="Pfam" id="PF21445">
    <property type="entry name" value="ADDB_N"/>
    <property type="match status" value="1"/>
</dbReference>
<dbReference type="Pfam" id="PF12705">
    <property type="entry name" value="PDDEXK_1"/>
    <property type="match status" value="1"/>
</dbReference>
<dbReference type="SUPFAM" id="SSF52540">
    <property type="entry name" value="P-loop containing nucleoside triphosphate hydrolases"/>
    <property type="match status" value="1"/>
</dbReference>
<name>ADDB_CLOK1</name>
<protein>
    <recommendedName>
        <fullName evidence="1">ATP-dependent helicase/deoxyribonuclease subunit B</fullName>
        <ecNumber evidence="1">3.1.-.-</ecNumber>
    </recommendedName>
    <alternativeName>
        <fullName evidence="1">ATP-dependent helicase/nuclease subunit AddB</fullName>
    </alternativeName>
</protein>
<organism>
    <name type="scientific">Clostridium kluyveri (strain NBRC 12016)</name>
    <dbReference type="NCBI Taxonomy" id="583346"/>
    <lineage>
        <taxon>Bacteria</taxon>
        <taxon>Bacillati</taxon>
        <taxon>Bacillota</taxon>
        <taxon>Clostridia</taxon>
        <taxon>Eubacteriales</taxon>
        <taxon>Clostridiaceae</taxon>
        <taxon>Clostridium</taxon>
    </lineage>
</organism>
<gene>
    <name evidence="1" type="primary">addB</name>
    <name type="ordered locus">CKR_0900</name>
</gene>
<proteinExistence type="inferred from homology"/>